<feature type="chain" id="PRO_0000358119" description="NADH-quinone oxidoreductase subunit C">
    <location>
        <begin position="1"/>
        <end position="199"/>
    </location>
</feature>
<evidence type="ECO:0000255" key="1">
    <source>
        <dbReference type="HAMAP-Rule" id="MF_01357"/>
    </source>
</evidence>
<gene>
    <name evidence="1" type="primary">nuoC</name>
    <name type="ordered locus">Lcho_1503</name>
</gene>
<organism>
    <name type="scientific">Leptothrix cholodnii (strain ATCC 51168 / LMG 8142 / SP-6)</name>
    <name type="common">Leptothrix discophora (strain SP-6)</name>
    <dbReference type="NCBI Taxonomy" id="395495"/>
    <lineage>
        <taxon>Bacteria</taxon>
        <taxon>Pseudomonadati</taxon>
        <taxon>Pseudomonadota</taxon>
        <taxon>Betaproteobacteria</taxon>
        <taxon>Burkholderiales</taxon>
        <taxon>Sphaerotilaceae</taxon>
        <taxon>Leptothrix</taxon>
    </lineage>
</organism>
<proteinExistence type="inferred from homology"/>
<accession>B1Y829</accession>
<comment type="function">
    <text evidence="1">NDH-1 shuttles electrons from NADH, via FMN and iron-sulfur (Fe-S) centers, to quinones in the respiratory chain. The immediate electron acceptor for the enzyme in this species is believed to be ubiquinone. Couples the redox reaction to proton translocation (for every two electrons transferred, four hydrogen ions are translocated across the cytoplasmic membrane), and thus conserves the redox energy in a proton gradient.</text>
</comment>
<comment type="catalytic activity">
    <reaction evidence="1">
        <text>a quinone + NADH + 5 H(+)(in) = a quinol + NAD(+) + 4 H(+)(out)</text>
        <dbReference type="Rhea" id="RHEA:57888"/>
        <dbReference type="ChEBI" id="CHEBI:15378"/>
        <dbReference type="ChEBI" id="CHEBI:24646"/>
        <dbReference type="ChEBI" id="CHEBI:57540"/>
        <dbReference type="ChEBI" id="CHEBI:57945"/>
        <dbReference type="ChEBI" id="CHEBI:132124"/>
    </reaction>
</comment>
<comment type="subunit">
    <text evidence="1">NDH-1 is composed of 14 different subunits. Subunits NuoB, C, D, E, F, and G constitute the peripheral sector of the complex.</text>
</comment>
<comment type="subcellular location">
    <subcellularLocation>
        <location evidence="1">Cell inner membrane</location>
        <topology evidence="1">Peripheral membrane protein</topology>
        <orientation evidence="1">Cytoplasmic side</orientation>
    </subcellularLocation>
</comment>
<comment type="similarity">
    <text evidence="1">Belongs to the complex I 30 kDa subunit family.</text>
</comment>
<keyword id="KW-0997">Cell inner membrane</keyword>
<keyword id="KW-1003">Cell membrane</keyword>
<keyword id="KW-0472">Membrane</keyword>
<keyword id="KW-0520">NAD</keyword>
<keyword id="KW-0874">Quinone</keyword>
<keyword id="KW-1185">Reference proteome</keyword>
<keyword id="KW-1278">Translocase</keyword>
<keyword id="KW-0813">Transport</keyword>
<keyword id="KW-0830">Ubiquinone</keyword>
<sequence>MTQKLDTLQAAIERVIGDRIVHLVRDRGELTLTVKATDYAAIGKTLRDHPDLGFEQLIDICGVDYSGYKDGGYEGLRYAAVSHLLSVQHNWRLRLKVFAPDDDFPLVASLTPIWSGANWFEREAFDMYGIVFDGHTDLRRILTDYGFIGHPMRKDFPVTGHVEMRYDPEQKRVIYQPVSIEPREITPRIIREDNYGGLH</sequence>
<reference key="1">
    <citation type="submission" date="2008-03" db="EMBL/GenBank/DDBJ databases">
        <title>Complete sequence of Leptothrix cholodnii SP-6.</title>
        <authorList>
            <consortium name="US DOE Joint Genome Institute"/>
            <person name="Copeland A."/>
            <person name="Lucas S."/>
            <person name="Lapidus A."/>
            <person name="Glavina del Rio T."/>
            <person name="Dalin E."/>
            <person name="Tice H."/>
            <person name="Bruce D."/>
            <person name="Goodwin L."/>
            <person name="Pitluck S."/>
            <person name="Chertkov O."/>
            <person name="Brettin T."/>
            <person name="Detter J.C."/>
            <person name="Han C."/>
            <person name="Kuske C.R."/>
            <person name="Schmutz J."/>
            <person name="Larimer F."/>
            <person name="Land M."/>
            <person name="Hauser L."/>
            <person name="Kyrpides N."/>
            <person name="Lykidis A."/>
            <person name="Emerson D."/>
            <person name="Richardson P."/>
        </authorList>
    </citation>
    <scope>NUCLEOTIDE SEQUENCE [LARGE SCALE GENOMIC DNA]</scope>
    <source>
        <strain>ATCC 51168 / LMG 8142 / SP-6</strain>
    </source>
</reference>
<name>NUOC_LEPCP</name>
<protein>
    <recommendedName>
        <fullName evidence="1">NADH-quinone oxidoreductase subunit C</fullName>
        <ecNumber evidence="1">7.1.1.-</ecNumber>
    </recommendedName>
    <alternativeName>
        <fullName evidence="1">NADH dehydrogenase I subunit C</fullName>
    </alternativeName>
    <alternativeName>
        <fullName evidence="1">NDH-1 subunit C</fullName>
    </alternativeName>
</protein>
<dbReference type="EC" id="7.1.1.-" evidence="1"/>
<dbReference type="EMBL" id="CP001013">
    <property type="protein sequence ID" value="ACB33771.1"/>
    <property type="molecule type" value="Genomic_DNA"/>
</dbReference>
<dbReference type="RefSeq" id="WP_012346533.1">
    <property type="nucleotide sequence ID" value="NC_010524.1"/>
</dbReference>
<dbReference type="SMR" id="B1Y829"/>
<dbReference type="STRING" id="395495.Lcho_1503"/>
<dbReference type="KEGG" id="lch:Lcho_1503"/>
<dbReference type="eggNOG" id="COG0852">
    <property type="taxonomic scope" value="Bacteria"/>
</dbReference>
<dbReference type="HOGENOM" id="CLU_042628_2_1_4"/>
<dbReference type="OrthoDB" id="9803286at2"/>
<dbReference type="Proteomes" id="UP000001693">
    <property type="component" value="Chromosome"/>
</dbReference>
<dbReference type="GO" id="GO:0005886">
    <property type="term" value="C:plasma membrane"/>
    <property type="evidence" value="ECO:0007669"/>
    <property type="project" value="UniProtKB-SubCell"/>
</dbReference>
<dbReference type="GO" id="GO:0008137">
    <property type="term" value="F:NADH dehydrogenase (ubiquinone) activity"/>
    <property type="evidence" value="ECO:0007669"/>
    <property type="project" value="InterPro"/>
</dbReference>
<dbReference type="GO" id="GO:0050136">
    <property type="term" value="F:NADH:ubiquinone reductase (non-electrogenic) activity"/>
    <property type="evidence" value="ECO:0007669"/>
    <property type="project" value="UniProtKB-UniRule"/>
</dbReference>
<dbReference type="GO" id="GO:0048038">
    <property type="term" value="F:quinone binding"/>
    <property type="evidence" value="ECO:0007669"/>
    <property type="project" value="UniProtKB-KW"/>
</dbReference>
<dbReference type="Gene3D" id="3.30.460.80">
    <property type="entry name" value="NADH:ubiquinone oxidoreductase, 30kDa subunit"/>
    <property type="match status" value="1"/>
</dbReference>
<dbReference type="HAMAP" id="MF_01357">
    <property type="entry name" value="NDH1_NuoC"/>
    <property type="match status" value="1"/>
</dbReference>
<dbReference type="InterPro" id="IPR010218">
    <property type="entry name" value="NADH_DH_suC"/>
</dbReference>
<dbReference type="InterPro" id="IPR037232">
    <property type="entry name" value="NADH_quin_OxRdtase_su_C/D-like"/>
</dbReference>
<dbReference type="InterPro" id="IPR001268">
    <property type="entry name" value="NADH_UbQ_OxRdtase_30kDa_su"/>
</dbReference>
<dbReference type="InterPro" id="IPR020396">
    <property type="entry name" value="NADH_UbQ_OxRdtase_CS"/>
</dbReference>
<dbReference type="NCBIfam" id="TIGR01961">
    <property type="entry name" value="NuoC_fam"/>
    <property type="match status" value="1"/>
</dbReference>
<dbReference type="NCBIfam" id="NF004730">
    <property type="entry name" value="PRK06074.1-1"/>
    <property type="match status" value="1"/>
</dbReference>
<dbReference type="PANTHER" id="PTHR10884:SF14">
    <property type="entry name" value="NADH DEHYDROGENASE [UBIQUINONE] IRON-SULFUR PROTEIN 3, MITOCHONDRIAL"/>
    <property type="match status" value="1"/>
</dbReference>
<dbReference type="PANTHER" id="PTHR10884">
    <property type="entry name" value="NADH DEHYDROGENASE UBIQUINONE IRON-SULFUR PROTEIN 3"/>
    <property type="match status" value="1"/>
</dbReference>
<dbReference type="Pfam" id="PF00329">
    <property type="entry name" value="Complex1_30kDa"/>
    <property type="match status" value="1"/>
</dbReference>
<dbReference type="SUPFAM" id="SSF143243">
    <property type="entry name" value="Nqo5-like"/>
    <property type="match status" value="1"/>
</dbReference>
<dbReference type="PROSITE" id="PS00542">
    <property type="entry name" value="COMPLEX1_30K"/>
    <property type="match status" value="1"/>
</dbReference>